<organism>
    <name type="scientific">Danio rerio</name>
    <name type="common">Zebrafish</name>
    <name type="synonym">Brachydanio rerio</name>
    <dbReference type="NCBI Taxonomy" id="7955"/>
    <lineage>
        <taxon>Eukaryota</taxon>
        <taxon>Metazoa</taxon>
        <taxon>Chordata</taxon>
        <taxon>Craniata</taxon>
        <taxon>Vertebrata</taxon>
        <taxon>Euteleostomi</taxon>
        <taxon>Actinopterygii</taxon>
        <taxon>Neopterygii</taxon>
        <taxon>Teleostei</taxon>
        <taxon>Ostariophysi</taxon>
        <taxon>Cypriniformes</taxon>
        <taxon>Danionidae</taxon>
        <taxon>Danioninae</taxon>
        <taxon>Danio</taxon>
    </lineage>
</organism>
<proteinExistence type="evidence at transcript level"/>
<name>KCTD7_DANRE</name>
<sequence length="292" mass="33810">MVVFSAASDSEKPGDAMSGADKGEEEYRKPAIPVANLNLAKSLRTLDAPEEFPEVIPLNVGGTYFTTRLSTLRRYEDTMLAAMFSGRHHIPRDAEGRYFIDRDGTYFGDILNFLREGELPQRDRVRAVHREAQYYAIGPLLENLEDTQPLTGEKVRQAFLDLLPYYKENLERIVEIAKLRAMQRKARFAKLKICVYKEEMPITPYERPLFNSLRFERSESEAKLFEHHCEVDVSFGPWEAVADVYDLLHCIVSDLAERGISADQQCIGVCDKHLINHYYCKRPIYEFKITWW</sequence>
<comment type="subcellular location">
    <subcellularLocation>
        <location evidence="1">Cell membrane</location>
    </subcellularLocation>
    <subcellularLocation>
        <location evidence="1">Cytoplasm</location>
        <location evidence="1">Cytosol</location>
    </subcellularLocation>
</comment>
<comment type="sequence caution" evidence="3">
    <conflict type="erroneous initiation">
        <sequence resource="EMBL-CDS" id="AAI18685"/>
    </conflict>
</comment>
<dbReference type="EMBL" id="BC118684">
    <property type="protein sequence ID" value="AAI18685.1"/>
    <property type="status" value="ALT_INIT"/>
    <property type="molecule type" value="mRNA"/>
</dbReference>
<dbReference type="SMR" id="Q0VFV7"/>
<dbReference type="FunCoup" id="Q0VFV7">
    <property type="interactions" value="109"/>
</dbReference>
<dbReference type="STRING" id="7955.ENSDARP00000116571"/>
<dbReference type="PaxDb" id="7955-ENSDARP00000116571"/>
<dbReference type="AGR" id="ZFIN:ZDB-GENE-060804-2"/>
<dbReference type="ZFIN" id="ZDB-GENE-060804-2">
    <property type="gene designation" value="kctd7"/>
</dbReference>
<dbReference type="eggNOG" id="KOG2723">
    <property type="taxonomic scope" value="Eukaryota"/>
</dbReference>
<dbReference type="InParanoid" id="Q0VFV7"/>
<dbReference type="PhylomeDB" id="Q0VFV7"/>
<dbReference type="Reactome" id="R-DRE-8951664">
    <property type="pathway name" value="Neddylation"/>
</dbReference>
<dbReference type="Reactome" id="R-DRE-983168">
    <property type="pathway name" value="Antigen processing: Ubiquitination &amp; Proteasome degradation"/>
</dbReference>
<dbReference type="PRO" id="PR:Q0VFV7"/>
<dbReference type="Proteomes" id="UP000000437">
    <property type="component" value="Unplaced"/>
</dbReference>
<dbReference type="GO" id="GO:0005829">
    <property type="term" value="C:cytosol"/>
    <property type="evidence" value="ECO:0007669"/>
    <property type="project" value="UniProtKB-SubCell"/>
</dbReference>
<dbReference type="GO" id="GO:0005886">
    <property type="term" value="C:plasma membrane"/>
    <property type="evidence" value="ECO:0000318"/>
    <property type="project" value="GO_Central"/>
</dbReference>
<dbReference type="GO" id="GO:0060081">
    <property type="term" value="P:membrane hyperpolarization"/>
    <property type="evidence" value="ECO:0000318"/>
    <property type="project" value="GO_Central"/>
</dbReference>
<dbReference type="GO" id="GO:0051260">
    <property type="term" value="P:protein homooligomerization"/>
    <property type="evidence" value="ECO:0007669"/>
    <property type="project" value="InterPro"/>
</dbReference>
<dbReference type="CDD" id="cd18366">
    <property type="entry name" value="BTB_POZ_KCTD7"/>
    <property type="match status" value="1"/>
</dbReference>
<dbReference type="FunFam" id="3.30.710.10:FF:000046">
    <property type="entry name" value="BTB/POZ domain-containing protein KCTD7 isoform X1"/>
    <property type="match status" value="1"/>
</dbReference>
<dbReference type="Gene3D" id="3.30.710.10">
    <property type="entry name" value="Potassium Channel Kv1.1, Chain A"/>
    <property type="match status" value="1"/>
</dbReference>
<dbReference type="InterPro" id="IPR000210">
    <property type="entry name" value="BTB/POZ_dom"/>
</dbReference>
<dbReference type="InterPro" id="IPR011333">
    <property type="entry name" value="SKP1/BTB/POZ_sf"/>
</dbReference>
<dbReference type="InterPro" id="IPR003131">
    <property type="entry name" value="T1-type_BTB"/>
</dbReference>
<dbReference type="PANTHER" id="PTHR14499:SF122">
    <property type="entry name" value="BTB_POZ DOMAIN-CONTAINING PROTEIN KCTD7"/>
    <property type="match status" value="1"/>
</dbReference>
<dbReference type="PANTHER" id="PTHR14499">
    <property type="entry name" value="POTASSIUM CHANNEL TETRAMERIZATION DOMAIN-CONTAINING"/>
    <property type="match status" value="1"/>
</dbReference>
<dbReference type="Pfam" id="PF02214">
    <property type="entry name" value="BTB_2"/>
    <property type="match status" value="1"/>
</dbReference>
<dbReference type="SMART" id="SM00225">
    <property type="entry name" value="BTB"/>
    <property type="match status" value="1"/>
</dbReference>
<dbReference type="SUPFAM" id="SSF54695">
    <property type="entry name" value="POZ domain"/>
    <property type="match status" value="1"/>
</dbReference>
<protein>
    <recommendedName>
        <fullName>BTB/POZ domain-containing protein KCTD7</fullName>
    </recommendedName>
</protein>
<evidence type="ECO:0000250" key="1"/>
<evidence type="ECO:0000256" key="2">
    <source>
        <dbReference type="SAM" id="MobiDB-lite"/>
    </source>
</evidence>
<evidence type="ECO:0000305" key="3"/>
<reference key="1">
    <citation type="submission" date="2006-07" db="EMBL/GenBank/DDBJ databases">
        <authorList>
            <consortium name="NIH - Zebrafish Gene Collection (ZGC) project"/>
        </authorList>
    </citation>
    <scope>NUCLEOTIDE SEQUENCE [LARGE SCALE MRNA]</scope>
</reference>
<accession>Q0VFV7</accession>
<keyword id="KW-1003">Cell membrane</keyword>
<keyword id="KW-0963">Cytoplasm</keyword>
<keyword id="KW-0472">Membrane</keyword>
<keyword id="KW-1185">Reference proteome</keyword>
<gene>
    <name type="primary">kctd7</name>
    <name type="ORF">zgc:136884</name>
</gene>
<feature type="chain" id="PRO_0000369241" description="BTB/POZ domain-containing protein KCTD7">
    <location>
        <begin position="1"/>
        <end position="292"/>
    </location>
</feature>
<feature type="domain" description="BTB">
    <location>
        <begin position="56"/>
        <end position="144"/>
    </location>
</feature>
<feature type="region of interest" description="Disordered" evidence="2">
    <location>
        <begin position="1"/>
        <end position="27"/>
    </location>
</feature>